<protein>
    <recommendedName>
        <fullName evidence="1">Small ribosomal subunit protein bS6</fullName>
    </recommendedName>
    <alternativeName>
        <fullName evidence="3">30S ribosomal protein S6</fullName>
    </alternativeName>
</protein>
<feature type="chain" id="PRO_1000205395" description="Small ribosomal subunit protein bS6">
    <location>
        <begin position="1"/>
        <end position="131"/>
    </location>
</feature>
<feature type="region of interest" description="Disordered" evidence="2">
    <location>
        <begin position="98"/>
        <end position="131"/>
    </location>
</feature>
<feature type="compositionally biased region" description="Basic and acidic residues" evidence="2">
    <location>
        <begin position="104"/>
        <end position="116"/>
    </location>
</feature>
<feature type="compositionally biased region" description="Acidic residues" evidence="2">
    <location>
        <begin position="120"/>
        <end position="131"/>
    </location>
</feature>
<feature type="modified residue" description="N6-acetyllysine" evidence="1">
    <location>
        <position position="93"/>
    </location>
</feature>
<accession>C4ZR77</accession>
<proteinExistence type="inferred from homology"/>
<dbReference type="EMBL" id="CP001396">
    <property type="protein sequence ID" value="ACR61799.1"/>
    <property type="molecule type" value="Genomic_DNA"/>
</dbReference>
<dbReference type="RefSeq" id="WP_001216676.1">
    <property type="nucleotide sequence ID" value="NC_012759.1"/>
</dbReference>
<dbReference type="SMR" id="C4ZR77"/>
<dbReference type="GeneID" id="93777623"/>
<dbReference type="KEGG" id="ebw:BWG_3912"/>
<dbReference type="HOGENOM" id="CLU_113441_6_1_6"/>
<dbReference type="GO" id="GO:0022627">
    <property type="term" value="C:cytosolic small ribosomal subunit"/>
    <property type="evidence" value="ECO:0007669"/>
    <property type="project" value="TreeGrafter"/>
</dbReference>
<dbReference type="GO" id="GO:0070181">
    <property type="term" value="F:small ribosomal subunit rRNA binding"/>
    <property type="evidence" value="ECO:0007669"/>
    <property type="project" value="TreeGrafter"/>
</dbReference>
<dbReference type="GO" id="GO:0003735">
    <property type="term" value="F:structural constituent of ribosome"/>
    <property type="evidence" value="ECO:0007669"/>
    <property type="project" value="InterPro"/>
</dbReference>
<dbReference type="GO" id="GO:0006412">
    <property type="term" value="P:translation"/>
    <property type="evidence" value="ECO:0007669"/>
    <property type="project" value="UniProtKB-UniRule"/>
</dbReference>
<dbReference type="CDD" id="cd00473">
    <property type="entry name" value="bS6"/>
    <property type="match status" value="1"/>
</dbReference>
<dbReference type="FunFam" id="3.30.70.60:FF:000003">
    <property type="entry name" value="30S ribosomal protein S6"/>
    <property type="match status" value="1"/>
</dbReference>
<dbReference type="Gene3D" id="3.30.70.60">
    <property type="match status" value="1"/>
</dbReference>
<dbReference type="HAMAP" id="MF_00360">
    <property type="entry name" value="Ribosomal_bS6"/>
    <property type="match status" value="1"/>
</dbReference>
<dbReference type="InterPro" id="IPR000529">
    <property type="entry name" value="Ribosomal_bS6"/>
</dbReference>
<dbReference type="InterPro" id="IPR020815">
    <property type="entry name" value="Ribosomal_bS6_CS"/>
</dbReference>
<dbReference type="InterPro" id="IPR035980">
    <property type="entry name" value="Ribosomal_bS6_sf"/>
</dbReference>
<dbReference type="InterPro" id="IPR020814">
    <property type="entry name" value="Ribosomal_S6_plastid/chlpt"/>
</dbReference>
<dbReference type="InterPro" id="IPR014717">
    <property type="entry name" value="Transl_elong_EF1B/ribsomal_bS6"/>
</dbReference>
<dbReference type="NCBIfam" id="TIGR00166">
    <property type="entry name" value="S6"/>
    <property type="match status" value="1"/>
</dbReference>
<dbReference type="PANTHER" id="PTHR21011">
    <property type="entry name" value="MITOCHONDRIAL 28S RIBOSOMAL PROTEIN S6"/>
    <property type="match status" value="1"/>
</dbReference>
<dbReference type="PANTHER" id="PTHR21011:SF1">
    <property type="entry name" value="SMALL RIBOSOMAL SUBUNIT PROTEIN BS6M"/>
    <property type="match status" value="1"/>
</dbReference>
<dbReference type="Pfam" id="PF01250">
    <property type="entry name" value="Ribosomal_S6"/>
    <property type="match status" value="1"/>
</dbReference>
<dbReference type="SUPFAM" id="SSF54995">
    <property type="entry name" value="Ribosomal protein S6"/>
    <property type="match status" value="1"/>
</dbReference>
<dbReference type="PROSITE" id="PS01048">
    <property type="entry name" value="RIBOSOMAL_S6"/>
    <property type="match status" value="1"/>
</dbReference>
<evidence type="ECO:0000255" key="1">
    <source>
        <dbReference type="HAMAP-Rule" id="MF_00360"/>
    </source>
</evidence>
<evidence type="ECO:0000256" key="2">
    <source>
        <dbReference type="SAM" id="MobiDB-lite"/>
    </source>
</evidence>
<evidence type="ECO:0000305" key="3"/>
<gene>
    <name evidence="1" type="primary">rpsF</name>
    <name type="ordered locus">BWG_3912</name>
</gene>
<name>RS6_ECOBW</name>
<reference key="1">
    <citation type="journal article" date="2009" name="J. Bacteriol.">
        <title>Genomic sequencing reveals regulatory mutations and recombinational events in the widely used MC4100 lineage of Escherichia coli K-12.</title>
        <authorList>
            <person name="Ferenci T."/>
            <person name="Zhou Z."/>
            <person name="Betteridge T."/>
            <person name="Ren Y."/>
            <person name="Liu Y."/>
            <person name="Feng L."/>
            <person name="Reeves P.R."/>
            <person name="Wang L."/>
        </authorList>
    </citation>
    <scope>NUCLEOTIDE SEQUENCE [LARGE SCALE GENOMIC DNA]</scope>
    <source>
        <strain>K12 / MC4100 / BW2952</strain>
    </source>
</reference>
<keyword id="KW-0007">Acetylation</keyword>
<keyword id="KW-0687">Ribonucleoprotein</keyword>
<keyword id="KW-0689">Ribosomal protein</keyword>
<keyword id="KW-0694">RNA-binding</keyword>
<keyword id="KW-0699">rRNA-binding</keyword>
<organism>
    <name type="scientific">Escherichia coli (strain K12 / MC4100 / BW2952)</name>
    <dbReference type="NCBI Taxonomy" id="595496"/>
    <lineage>
        <taxon>Bacteria</taxon>
        <taxon>Pseudomonadati</taxon>
        <taxon>Pseudomonadota</taxon>
        <taxon>Gammaproteobacteria</taxon>
        <taxon>Enterobacterales</taxon>
        <taxon>Enterobacteriaceae</taxon>
        <taxon>Escherichia</taxon>
    </lineage>
</organism>
<comment type="function">
    <text evidence="1">Binds together with bS18 to 16S ribosomal RNA.</text>
</comment>
<comment type="similarity">
    <text evidence="1">Belongs to the bacterial ribosomal protein bS6 family.</text>
</comment>
<sequence>MRHYEIVFMVHPDQSEQVPGMIERYTAAITGAEGKIHRLEDWGRRQLAYPINKLHKAHYVLMNVEAPQEVIDELETTFRFNDAVIRSMVMRTKHAVTEASPMVKAKDERRERRDDFANETADDAEAGDSEE</sequence>